<protein>
    <recommendedName>
        <fullName evidence="1">Aspartate 1-decarboxylase</fullName>
        <ecNumber evidence="1">4.1.1.11</ecNumber>
    </recommendedName>
    <alternativeName>
        <fullName evidence="1">Aspartate alpha-decarboxylase</fullName>
    </alternativeName>
    <component>
        <recommendedName>
            <fullName evidence="1">Aspartate 1-decarboxylase beta chain</fullName>
        </recommendedName>
    </component>
    <component>
        <recommendedName>
            <fullName evidence="1">Aspartate 1-decarboxylase alpha chain</fullName>
        </recommendedName>
    </component>
</protein>
<keyword id="KW-0068">Autocatalytic cleavage</keyword>
<keyword id="KW-0963">Cytoplasm</keyword>
<keyword id="KW-0210">Decarboxylase</keyword>
<keyword id="KW-0456">Lyase</keyword>
<keyword id="KW-0566">Pantothenate biosynthesis</keyword>
<keyword id="KW-0670">Pyruvate</keyword>
<keyword id="KW-0704">Schiff base</keyword>
<keyword id="KW-0865">Zymogen</keyword>
<name>PAND_BACCN</name>
<dbReference type="EC" id="4.1.1.11" evidence="1"/>
<dbReference type="EMBL" id="CP000764">
    <property type="protein sequence ID" value="ABS21586.1"/>
    <property type="molecule type" value="Genomic_DNA"/>
</dbReference>
<dbReference type="RefSeq" id="WP_012093753.1">
    <property type="nucleotide sequence ID" value="NC_009674.1"/>
</dbReference>
<dbReference type="SMR" id="A7GN78"/>
<dbReference type="STRING" id="315749.Bcer98_1264"/>
<dbReference type="GeneID" id="33896613"/>
<dbReference type="KEGG" id="bcy:Bcer98_1264"/>
<dbReference type="eggNOG" id="COG0853">
    <property type="taxonomic scope" value="Bacteria"/>
</dbReference>
<dbReference type="HOGENOM" id="CLU_115305_2_0_9"/>
<dbReference type="OrthoDB" id="9803983at2"/>
<dbReference type="UniPathway" id="UPA00028">
    <property type="reaction ID" value="UER00002"/>
</dbReference>
<dbReference type="Proteomes" id="UP000002300">
    <property type="component" value="Chromosome"/>
</dbReference>
<dbReference type="GO" id="GO:0005829">
    <property type="term" value="C:cytosol"/>
    <property type="evidence" value="ECO:0007669"/>
    <property type="project" value="TreeGrafter"/>
</dbReference>
<dbReference type="GO" id="GO:0004068">
    <property type="term" value="F:aspartate 1-decarboxylase activity"/>
    <property type="evidence" value="ECO:0007669"/>
    <property type="project" value="UniProtKB-UniRule"/>
</dbReference>
<dbReference type="GO" id="GO:0006523">
    <property type="term" value="P:alanine biosynthetic process"/>
    <property type="evidence" value="ECO:0007669"/>
    <property type="project" value="InterPro"/>
</dbReference>
<dbReference type="GO" id="GO:0015940">
    <property type="term" value="P:pantothenate biosynthetic process"/>
    <property type="evidence" value="ECO:0007669"/>
    <property type="project" value="UniProtKB-UniRule"/>
</dbReference>
<dbReference type="CDD" id="cd06919">
    <property type="entry name" value="Asp_decarbox"/>
    <property type="match status" value="1"/>
</dbReference>
<dbReference type="Gene3D" id="2.40.40.20">
    <property type="match status" value="1"/>
</dbReference>
<dbReference type="HAMAP" id="MF_00446">
    <property type="entry name" value="PanD"/>
    <property type="match status" value="1"/>
</dbReference>
<dbReference type="InterPro" id="IPR009010">
    <property type="entry name" value="Asp_de-COase-like_dom_sf"/>
</dbReference>
<dbReference type="InterPro" id="IPR003190">
    <property type="entry name" value="Asp_decarbox"/>
</dbReference>
<dbReference type="NCBIfam" id="TIGR00223">
    <property type="entry name" value="panD"/>
    <property type="match status" value="1"/>
</dbReference>
<dbReference type="PANTHER" id="PTHR21012">
    <property type="entry name" value="ASPARTATE 1-DECARBOXYLASE"/>
    <property type="match status" value="1"/>
</dbReference>
<dbReference type="PANTHER" id="PTHR21012:SF0">
    <property type="entry name" value="ASPARTATE 1-DECARBOXYLASE"/>
    <property type="match status" value="1"/>
</dbReference>
<dbReference type="Pfam" id="PF02261">
    <property type="entry name" value="Asp_decarbox"/>
    <property type="match status" value="1"/>
</dbReference>
<dbReference type="PIRSF" id="PIRSF006246">
    <property type="entry name" value="Asp_decarbox"/>
    <property type="match status" value="1"/>
</dbReference>
<dbReference type="SUPFAM" id="SSF50692">
    <property type="entry name" value="ADC-like"/>
    <property type="match status" value="1"/>
</dbReference>
<feature type="chain" id="PRO_1000080910" description="Aspartate 1-decarboxylase beta chain" evidence="1">
    <location>
        <begin position="1"/>
        <end position="24"/>
    </location>
</feature>
<feature type="chain" id="PRO_1000080911" description="Aspartate 1-decarboxylase alpha chain" evidence="1">
    <location>
        <begin position="25"/>
        <end position="127"/>
    </location>
</feature>
<feature type="active site" description="Schiff-base intermediate with substrate; via pyruvic acid" evidence="1">
    <location>
        <position position="25"/>
    </location>
</feature>
<feature type="active site" description="Proton donor" evidence="1">
    <location>
        <position position="58"/>
    </location>
</feature>
<feature type="binding site" evidence="1">
    <location>
        <position position="57"/>
    </location>
    <ligand>
        <name>substrate</name>
    </ligand>
</feature>
<feature type="binding site" evidence="1">
    <location>
        <begin position="73"/>
        <end position="75"/>
    </location>
    <ligand>
        <name>substrate</name>
    </ligand>
</feature>
<feature type="modified residue" description="Pyruvic acid (Ser)" evidence="1">
    <location>
        <position position="25"/>
    </location>
</feature>
<reference key="1">
    <citation type="journal article" date="2008" name="Chem. Biol. Interact.">
        <title>Extending the Bacillus cereus group genomics to putative food-borne pathogens of different toxicity.</title>
        <authorList>
            <person name="Lapidus A."/>
            <person name="Goltsman E."/>
            <person name="Auger S."/>
            <person name="Galleron N."/>
            <person name="Segurens B."/>
            <person name="Dossat C."/>
            <person name="Land M.L."/>
            <person name="Broussolle V."/>
            <person name="Brillard J."/>
            <person name="Guinebretiere M.-H."/>
            <person name="Sanchis V."/>
            <person name="Nguen-the C."/>
            <person name="Lereclus D."/>
            <person name="Richardson P."/>
            <person name="Wincker P."/>
            <person name="Weissenbach J."/>
            <person name="Ehrlich S.D."/>
            <person name="Sorokin A."/>
        </authorList>
    </citation>
    <scope>NUCLEOTIDE SEQUENCE [LARGE SCALE GENOMIC DNA]</scope>
    <source>
        <strain>DSM 22905 / CIP 110041 / 391-98 / NVH 391-98</strain>
    </source>
</reference>
<accession>A7GN78</accession>
<evidence type="ECO:0000255" key="1">
    <source>
        <dbReference type="HAMAP-Rule" id="MF_00446"/>
    </source>
</evidence>
<sequence length="127" mass="14024">MFRTMMRAKLHRATVTEANLNYVGSITIDEDLMDAVEIVENEKVQVVNNNNGERLETYVIKGERGSGVICLNGAAARLVQPGDKVIIICYGLVSAEEVYKQIPKIAVLDDRNQIIEMLSAEKAGTEV</sequence>
<organism>
    <name type="scientific">Bacillus cytotoxicus (strain DSM 22905 / CIP 110041 / 391-98 / NVH 391-98)</name>
    <dbReference type="NCBI Taxonomy" id="315749"/>
    <lineage>
        <taxon>Bacteria</taxon>
        <taxon>Bacillati</taxon>
        <taxon>Bacillota</taxon>
        <taxon>Bacilli</taxon>
        <taxon>Bacillales</taxon>
        <taxon>Bacillaceae</taxon>
        <taxon>Bacillus</taxon>
        <taxon>Bacillus cereus group</taxon>
    </lineage>
</organism>
<gene>
    <name evidence="1" type="primary">panD</name>
    <name type="ordered locus">Bcer98_1264</name>
</gene>
<comment type="function">
    <text evidence="1">Catalyzes the pyruvoyl-dependent decarboxylation of aspartate to produce beta-alanine.</text>
</comment>
<comment type="catalytic activity">
    <reaction evidence="1">
        <text>L-aspartate + H(+) = beta-alanine + CO2</text>
        <dbReference type="Rhea" id="RHEA:19497"/>
        <dbReference type="ChEBI" id="CHEBI:15378"/>
        <dbReference type="ChEBI" id="CHEBI:16526"/>
        <dbReference type="ChEBI" id="CHEBI:29991"/>
        <dbReference type="ChEBI" id="CHEBI:57966"/>
        <dbReference type="EC" id="4.1.1.11"/>
    </reaction>
</comment>
<comment type="cofactor">
    <cofactor evidence="1">
        <name>pyruvate</name>
        <dbReference type="ChEBI" id="CHEBI:15361"/>
    </cofactor>
    <text evidence="1">Binds 1 pyruvoyl group covalently per subunit.</text>
</comment>
<comment type="pathway">
    <text evidence="1">Cofactor biosynthesis; (R)-pantothenate biosynthesis; beta-alanine from L-aspartate: step 1/1.</text>
</comment>
<comment type="subunit">
    <text evidence="1">Heterooctamer of four alpha and four beta subunits.</text>
</comment>
<comment type="subcellular location">
    <subcellularLocation>
        <location evidence="1">Cytoplasm</location>
    </subcellularLocation>
</comment>
<comment type="PTM">
    <text evidence="1">Is synthesized initially as an inactive proenzyme, which is activated by self-cleavage at a specific serine bond to produce a beta-subunit with a hydroxyl group at its C-terminus and an alpha-subunit with a pyruvoyl group at its N-terminus.</text>
</comment>
<comment type="similarity">
    <text evidence="1">Belongs to the PanD family.</text>
</comment>
<proteinExistence type="inferred from homology"/>